<evidence type="ECO:0000255" key="1">
    <source>
        <dbReference type="HAMAP-Rule" id="MF_02009"/>
    </source>
</evidence>
<comment type="function">
    <text evidence="1">Catalyzes the attachment of tyrosine to tRNA(Tyr) in a two-step reaction: tyrosine is first activated by ATP to form Tyr-AMP and then transferred to the acceptor end of tRNA(Tyr).</text>
</comment>
<comment type="catalytic activity">
    <reaction evidence="1">
        <text>tRNA(Tyr) + L-tyrosine + ATP = L-tyrosyl-tRNA(Tyr) + AMP + diphosphate + H(+)</text>
        <dbReference type="Rhea" id="RHEA:10220"/>
        <dbReference type="Rhea" id="RHEA-COMP:9706"/>
        <dbReference type="Rhea" id="RHEA-COMP:9707"/>
        <dbReference type="ChEBI" id="CHEBI:15378"/>
        <dbReference type="ChEBI" id="CHEBI:30616"/>
        <dbReference type="ChEBI" id="CHEBI:33019"/>
        <dbReference type="ChEBI" id="CHEBI:58315"/>
        <dbReference type="ChEBI" id="CHEBI:78442"/>
        <dbReference type="ChEBI" id="CHEBI:78536"/>
        <dbReference type="ChEBI" id="CHEBI:456215"/>
        <dbReference type="EC" id="6.1.1.1"/>
    </reaction>
</comment>
<comment type="subunit">
    <text evidence="1">Homodimer.</text>
</comment>
<comment type="subcellular location">
    <subcellularLocation>
        <location>Cytoplasm</location>
    </subcellularLocation>
</comment>
<comment type="similarity">
    <text evidence="1">Belongs to the class-I aminoacyl-tRNA synthetase family. TyrS type 4 subfamily.</text>
</comment>
<name>SYY_SACS2</name>
<sequence length="366" mass="41820">MGKLIMSIDQRLQLIMRNTAEVITIDELRKKLESDEKLKGYIGFEPSGLFHIGWLIWTQKVKDLVEAGINMTLLRAAWHAWINDKLGGDMNLIKMAADYAVEVIKNYGVDVGKLNIVDADDIVKEKDYWALVIKVAKNASLARIKRALTIMGRRAEEAEIDASKLIYPAMQVSDIFYLDLDIALGGTDQRKAHMLARDVAEKMGKKKIVSIHTPLLVGLQGGQRMNITEGMEEDDIQAEIKMSKSKPESAIFVNDSREDVERKIMGAYCPKGVAENNPILQILKYIIFPRYNFVKIERDIKYGGDVEFKDYEELERTYIEGKIHPMDLKKTTARKLNEILEPIRKSLEKKPEFEEMIQKISKSVTR</sequence>
<proteinExistence type="inferred from homology"/>
<dbReference type="EC" id="6.1.1.1" evidence="1"/>
<dbReference type="EMBL" id="Y08257">
    <property type="protein sequence ID" value="CAA69524.1"/>
    <property type="molecule type" value="Genomic_DNA"/>
</dbReference>
<dbReference type="EMBL" id="AE006641">
    <property type="protein sequence ID" value="AAK40439.1"/>
    <property type="molecule type" value="Genomic_DNA"/>
</dbReference>
<dbReference type="PIR" id="S75410">
    <property type="entry name" value="S75410"/>
</dbReference>
<dbReference type="SMR" id="P95982"/>
<dbReference type="FunCoup" id="P95982">
    <property type="interactions" value="250"/>
</dbReference>
<dbReference type="STRING" id="273057.SSO0078"/>
<dbReference type="PaxDb" id="273057-SSO0078"/>
<dbReference type="EnsemblBacteria" id="AAK40439">
    <property type="protein sequence ID" value="AAK40439"/>
    <property type="gene ID" value="SSO0078"/>
</dbReference>
<dbReference type="KEGG" id="sso:SSO0078"/>
<dbReference type="PATRIC" id="fig|273057.12.peg.78"/>
<dbReference type="eggNOG" id="arCOG01886">
    <property type="taxonomic scope" value="Archaea"/>
</dbReference>
<dbReference type="HOGENOM" id="CLU_035267_1_1_2"/>
<dbReference type="InParanoid" id="P95982"/>
<dbReference type="PhylomeDB" id="P95982"/>
<dbReference type="Proteomes" id="UP000001974">
    <property type="component" value="Chromosome"/>
</dbReference>
<dbReference type="GO" id="GO:0005737">
    <property type="term" value="C:cytoplasm"/>
    <property type="evidence" value="ECO:0000318"/>
    <property type="project" value="GO_Central"/>
</dbReference>
<dbReference type="GO" id="GO:0005524">
    <property type="term" value="F:ATP binding"/>
    <property type="evidence" value="ECO:0007669"/>
    <property type="project" value="UniProtKB-UniRule"/>
</dbReference>
<dbReference type="GO" id="GO:0004831">
    <property type="term" value="F:tyrosine-tRNA ligase activity"/>
    <property type="evidence" value="ECO:0000318"/>
    <property type="project" value="GO_Central"/>
</dbReference>
<dbReference type="GO" id="GO:0006437">
    <property type="term" value="P:tyrosyl-tRNA aminoacylation"/>
    <property type="evidence" value="ECO:0000318"/>
    <property type="project" value="GO_Central"/>
</dbReference>
<dbReference type="CDD" id="cd00805">
    <property type="entry name" value="TyrRS_core"/>
    <property type="match status" value="1"/>
</dbReference>
<dbReference type="Gene3D" id="3.40.50.620">
    <property type="entry name" value="HUPs"/>
    <property type="match status" value="1"/>
</dbReference>
<dbReference type="Gene3D" id="1.10.240.10">
    <property type="entry name" value="Tyrosyl-Transfer RNA Synthetase"/>
    <property type="match status" value="1"/>
</dbReference>
<dbReference type="HAMAP" id="MF_02009">
    <property type="entry name" value="Tyr_tRNA_synth_type4"/>
    <property type="match status" value="1"/>
</dbReference>
<dbReference type="InterPro" id="IPR002305">
    <property type="entry name" value="aa-tRNA-synth_Ic"/>
</dbReference>
<dbReference type="InterPro" id="IPR014729">
    <property type="entry name" value="Rossmann-like_a/b/a_fold"/>
</dbReference>
<dbReference type="InterPro" id="IPR002307">
    <property type="entry name" value="Tyr-tRNA-ligase"/>
</dbReference>
<dbReference type="InterPro" id="IPR023678">
    <property type="entry name" value="Tyr-tRNA-ligase_4"/>
</dbReference>
<dbReference type="InterPro" id="IPR023617">
    <property type="entry name" value="Tyr-tRNA-ligase_arc/euk-type"/>
</dbReference>
<dbReference type="InterPro" id="IPR050489">
    <property type="entry name" value="Tyr-tRNA_synthase"/>
</dbReference>
<dbReference type="NCBIfam" id="NF006330">
    <property type="entry name" value="PRK08560.1"/>
    <property type="match status" value="1"/>
</dbReference>
<dbReference type="NCBIfam" id="TIGR00234">
    <property type="entry name" value="tyrS"/>
    <property type="match status" value="1"/>
</dbReference>
<dbReference type="PANTHER" id="PTHR46264:SF4">
    <property type="entry name" value="TYROSINE--TRNA LIGASE, CYTOPLASMIC"/>
    <property type="match status" value="1"/>
</dbReference>
<dbReference type="PANTHER" id="PTHR46264">
    <property type="entry name" value="TYROSINE-TRNA LIGASE"/>
    <property type="match status" value="1"/>
</dbReference>
<dbReference type="Pfam" id="PF00579">
    <property type="entry name" value="tRNA-synt_1b"/>
    <property type="match status" value="1"/>
</dbReference>
<dbReference type="PIRSF" id="PIRSF006588">
    <property type="entry name" value="TyrRS_arch_euk"/>
    <property type="match status" value="1"/>
</dbReference>
<dbReference type="PRINTS" id="PR01040">
    <property type="entry name" value="TRNASYNTHTYR"/>
</dbReference>
<dbReference type="SUPFAM" id="SSF52374">
    <property type="entry name" value="Nucleotidylyl transferase"/>
    <property type="match status" value="1"/>
</dbReference>
<feature type="chain" id="PRO_0000055671" description="Tyrosine--tRNA ligase">
    <location>
        <begin position="1"/>
        <end position="366"/>
    </location>
</feature>
<feature type="short sequence motif" description="'KMSKS' region">
    <location>
        <begin position="241"/>
        <end position="245"/>
    </location>
</feature>
<feature type="binding site" evidence="1">
    <location>
        <position position="41"/>
    </location>
    <ligand>
        <name>L-tyrosine</name>
        <dbReference type="ChEBI" id="CHEBI:58315"/>
    </ligand>
</feature>
<feature type="binding site" evidence="1">
    <location>
        <position position="167"/>
    </location>
    <ligand>
        <name>L-tyrosine</name>
        <dbReference type="ChEBI" id="CHEBI:58315"/>
    </ligand>
</feature>
<feature type="binding site" evidence="1">
    <location>
        <position position="171"/>
    </location>
    <ligand>
        <name>L-tyrosine</name>
        <dbReference type="ChEBI" id="CHEBI:58315"/>
    </ligand>
</feature>
<feature type="binding site" evidence="1">
    <location>
        <position position="174"/>
    </location>
    <ligand>
        <name>L-tyrosine</name>
        <dbReference type="ChEBI" id="CHEBI:58315"/>
    </ligand>
</feature>
<feature type="binding site" evidence="1">
    <location>
        <position position="189"/>
    </location>
    <ligand>
        <name>L-tyrosine</name>
        <dbReference type="ChEBI" id="CHEBI:58315"/>
    </ligand>
</feature>
<feature type="binding site" evidence="1">
    <location>
        <position position="244"/>
    </location>
    <ligand>
        <name>ATP</name>
        <dbReference type="ChEBI" id="CHEBI:30616"/>
    </ligand>
</feature>
<keyword id="KW-0030">Aminoacyl-tRNA synthetase</keyword>
<keyword id="KW-0067">ATP-binding</keyword>
<keyword id="KW-0963">Cytoplasm</keyword>
<keyword id="KW-0436">Ligase</keyword>
<keyword id="KW-0547">Nucleotide-binding</keyword>
<keyword id="KW-0648">Protein biosynthesis</keyword>
<keyword id="KW-1185">Reference proteome</keyword>
<protein>
    <recommendedName>
        <fullName evidence="1">Tyrosine--tRNA ligase</fullName>
        <ecNumber evidence="1">6.1.1.1</ecNumber>
    </recommendedName>
    <alternativeName>
        <fullName evidence="1">Tyrosyl-tRNA synthetase</fullName>
        <shortName evidence="1">TyrRS</shortName>
    </alternativeName>
</protein>
<organism>
    <name type="scientific">Saccharolobus solfataricus (strain ATCC 35092 / DSM 1617 / JCM 11322 / P2)</name>
    <name type="common">Sulfolobus solfataricus</name>
    <dbReference type="NCBI Taxonomy" id="273057"/>
    <lineage>
        <taxon>Archaea</taxon>
        <taxon>Thermoproteota</taxon>
        <taxon>Thermoprotei</taxon>
        <taxon>Sulfolobales</taxon>
        <taxon>Sulfolobaceae</taxon>
        <taxon>Saccharolobus</taxon>
    </lineage>
</organism>
<accession>P95982</accession>
<gene>
    <name evidence="1" type="primary">tyrS</name>
    <name type="ordered locus">SSO0078</name>
    <name type="ORF">C04_044</name>
</gene>
<reference key="1">
    <citation type="journal article" date="1996" name="Mol. Microbiol.">
        <title>Organizational characteristics and information content of an archaeal genome: 156 kb of sequence from Sulfolobus solfataricus P2.</title>
        <authorList>
            <person name="Sensen C.W."/>
            <person name="Klenk H.-P."/>
            <person name="Singh R.K."/>
            <person name="Allard G."/>
            <person name="Chan C.C.-Y."/>
            <person name="Liu Q.Y."/>
            <person name="Penny S.L."/>
            <person name="Young F."/>
            <person name="Schenk M.E."/>
            <person name="Gaasterland T."/>
            <person name="Doolittle W.F."/>
            <person name="Ragan M.A."/>
            <person name="Charlebois R.L."/>
        </authorList>
    </citation>
    <scope>NUCLEOTIDE SEQUENCE [GENOMIC DNA]</scope>
    <source>
        <strain>ATCC 35092 / DSM 1617 / JCM 11322 / P2</strain>
    </source>
</reference>
<reference key="2">
    <citation type="journal article" date="2001" name="Proc. Natl. Acad. Sci. U.S.A.">
        <title>The complete genome of the crenarchaeon Sulfolobus solfataricus P2.</title>
        <authorList>
            <person name="She Q."/>
            <person name="Singh R.K."/>
            <person name="Confalonieri F."/>
            <person name="Zivanovic Y."/>
            <person name="Allard G."/>
            <person name="Awayez M.J."/>
            <person name="Chan-Weiher C.C.-Y."/>
            <person name="Clausen I.G."/>
            <person name="Curtis B.A."/>
            <person name="De Moors A."/>
            <person name="Erauso G."/>
            <person name="Fletcher C."/>
            <person name="Gordon P.M.K."/>
            <person name="Heikamp-de Jong I."/>
            <person name="Jeffries A.C."/>
            <person name="Kozera C.J."/>
            <person name="Medina N."/>
            <person name="Peng X."/>
            <person name="Thi-Ngoc H.P."/>
            <person name="Redder P."/>
            <person name="Schenk M.E."/>
            <person name="Theriault C."/>
            <person name="Tolstrup N."/>
            <person name="Charlebois R.L."/>
            <person name="Doolittle W.F."/>
            <person name="Duguet M."/>
            <person name="Gaasterland T."/>
            <person name="Garrett R.A."/>
            <person name="Ragan M.A."/>
            <person name="Sensen C.W."/>
            <person name="Van der Oost J."/>
        </authorList>
    </citation>
    <scope>NUCLEOTIDE SEQUENCE [LARGE SCALE GENOMIC DNA]</scope>
    <source>
        <strain>ATCC 35092 / DSM 1617 / JCM 11322 / P2</strain>
    </source>
</reference>